<proteinExistence type="inferred from homology"/>
<feature type="chain" id="PRO_1000026227" description="Nucleoside diphosphate kinase">
    <location>
        <begin position="1"/>
        <end position="143"/>
    </location>
</feature>
<feature type="active site" description="Pros-phosphohistidine intermediate" evidence="1">
    <location>
        <position position="117"/>
    </location>
</feature>
<feature type="binding site" evidence="1">
    <location>
        <position position="11"/>
    </location>
    <ligand>
        <name>ATP</name>
        <dbReference type="ChEBI" id="CHEBI:30616"/>
    </ligand>
</feature>
<feature type="binding site" evidence="1">
    <location>
        <position position="59"/>
    </location>
    <ligand>
        <name>ATP</name>
        <dbReference type="ChEBI" id="CHEBI:30616"/>
    </ligand>
</feature>
<feature type="binding site" evidence="1">
    <location>
        <position position="87"/>
    </location>
    <ligand>
        <name>ATP</name>
        <dbReference type="ChEBI" id="CHEBI:30616"/>
    </ligand>
</feature>
<feature type="binding site" evidence="1">
    <location>
        <position position="93"/>
    </location>
    <ligand>
        <name>ATP</name>
        <dbReference type="ChEBI" id="CHEBI:30616"/>
    </ligand>
</feature>
<feature type="binding site" evidence="1">
    <location>
        <position position="104"/>
    </location>
    <ligand>
        <name>ATP</name>
        <dbReference type="ChEBI" id="CHEBI:30616"/>
    </ligand>
</feature>
<feature type="binding site" evidence="1">
    <location>
        <position position="114"/>
    </location>
    <ligand>
        <name>ATP</name>
        <dbReference type="ChEBI" id="CHEBI:30616"/>
    </ligand>
</feature>
<name>NDK_CITK8</name>
<gene>
    <name evidence="1" type="primary">ndk</name>
    <name type="ordered locus">CKO_00265</name>
</gene>
<sequence>MAIERTFSIIKPNAVAKNVIGNIFARFEAAGFKIVGTKMLHLTVEQARGFYAEHDGKPFFDGLVEFMTSGPIVVSVLESENAVQRHRDLLGATNPANALAGTLRADYADSFTENGTHGSDSLESAQREIAYFFGEGEVCPRTR</sequence>
<keyword id="KW-0067">ATP-binding</keyword>
<keyword id="KW-0963">Cytoplasm</keyword>
<keyword id="KW-0418">Kinase</keyword>
<keyword id="KW-0460">Magnesium</keyword>
<keyword id="KW-0479">Metal-binding</keyword>
<keyword id="KW-0546">Nucleotide metabolism</keyword>
<keyword id="KW-0547">Nucleotide-binding</keyword>
<keyword id="KW-0597">Phosphoprotein</keyword>
<keyword id="KW-1185">Reference proteome</keyword>
<keyword id="KW-0808">Transferase</keyword>
<accession>A8AD67</accession>
<reference key="1">
    <citation type="submission" date="2007-08" db="EMBL/GenBank/DDBJ databases">
        <authorList>
            <consortium name="The Citrobacter koseri Genome Sequencing Project"/>
            <person name="McClelland M."/>
            <person name="Sanderson E.K."/>
            <person name="Porwollik S."/>
            <person name="Spieth J."/>
            <person name="Clifton W.S."/>
            <person name="Latreille P."/>
            <person name="Courtney L."/>
            <person name="Wang C."/>
            <person name="Pepin K."/>
            <person name="Bhonagiri V."/>
            <person name="Nash W."/>
            <person name="Johnson M."/>
            <person name="Thiruvilangam P."/>
            <person name="Wilson R."/>
        </authorList>
    </citation>
    <scope>NUCLEOTIDE SEQUENCE [LARGE SCALE GENOMIC DNA]</scope>
    <source>
        <strain>ATCC BAA-895 / CDC 4225-83 / SGSC4696</strain>
    </source>
</reference>
<evidence type="ECO:0000255" key="1">
    <source>
        <dbReference type="HAMAP-Rule" id="MF_00451"/>
    </source>
</evidence>
<organism>
    <name type="scientific">Citrobacter koseri (strain ATCC BAA-895 / CDC 4225-83 / SGSC4696)</name>
    <dbReference type="NCBI Taxonomy" id="290338"/>
    <lineage>
        <taxon>Bacteria</taxon>
        <taxon>Pseudomonadati</taxon>
        <taxon>Pseudomonadota</taxon>
        <taxon>Gammaproteobacteria</taxon>
        <taxon>Enterobacterales</taxon>
        <taxon>Enterobacteriaceae</taxon>
        <taxon>Citrobacter</taxon>
    </lineage>
</organism>
<comment type="function">
    <text evidence="1">Major role in the synthesis of nucleoside triphosphates other than ATP. The ATP gamma phosphate is transferred to the NDP beta phosphate via a ping-pong mechanism, using a phosphorylated active-site intermediate.</text>
</comment>
<comment type="catalytic activity">
    <reaction evidence="1">
        <text>a 2'-deoxyribonucleoside 5'-diphosphate + ATP = a 2'-deoxyribonucleoside 5'-triphosphate + ADP</text>
        <dbReference type="Rhea" id="RHEA:44640"/>
        <dbReference type="ChEBI" id="CHEBI:30616"/>
        <dbReference type="ChEBI" id="CHEBI:61560"/>
        <dbReference type="ChEBI" id="CHEBI:73316"/>
        <dbReference type="ChEBI" id="CHEBI:456216"/>
        <dbReference type="EC" id="2.7.4.6"/>
    </reaction>
</comment>
<comment type="catalytic activity">
    <reaction evidence="1">
        <text>a ribonucleoside 5'-diphosphate + ATP = a ribonucleoside 5'-triphosphate + ADP</text>
        <dbReference type="Rhea" id="RHEA:18113"/>
        <dbReference type="ChEBI" id="CHEBI:30616"/>
        <dbReference type="ChEBI" id="CHEBI:57930"/>
        <dbReference type="ChEBI" id="CHEBI:61557"/>
        <dbReference type="ChEBI" id="CHEBI:456216"/>
        <dbReference type="EC" id="2.7.4.6"/>
    </reaction>
</comment>
<comment type="cofactor">
    <cofactor evidence="1">
        <name>Mg(2+)</name>
        <dbReference type="ChEBI" id="CHEBI:18420"/>
    </cofactor>
</comment>
<comment type="subunit">
    <text evidence="1">Homotetramer.</text>
</comment>
<comment type="subcellular location">
    <subcellularLocation>
        <location evidence="1">Cytoplasm</location>
    </subcellularLocation>
</comment>
<comment type="similarity">
    <text evidence="1">Belongs to the NDK family.</text>
</comment>
<dbReference type="EC" id="2.7.4.6" evidence="1"/>
<dbReference type="EMBL" id="CP000822">
    <property type="protein sequence ID" value="ABV11429.1"/>
    <property type="molecule type" value="Genomic_DNA"/>
</dbReference>
<dbReference type="RefSeq" id="WP_012131261.1">
    <property type="nucleotide sequence ID" value="NC_009792.1"/>
</dbReference>
<dbReference type="SMR" id="A8AD67"/>
<dbReference type="STRING" id="290338.CKO_00265"/>
<dbReference type="GeneID" id="45134546"/>
<dbReference type="KEGG" id="cko:CKO_00265"/>
<dbReference type="HOGENOM" id="CLU_060216_8_1_6"/>
<dbReference type="OrthoDB" id="9801161at2"/>
<dbReference type="Proteomes" id="UP000008148">
    <property type="component" value="Chromosome"/>
</dbReference>
<dbReference type="GO" id="GO:0005737">
    <property type="term" value="C:cytoplasm"/>
    <property type="evidence" value="ECO:0007669"/>
    <property type="project" value="UniProtKB-SubCell"/>
</dbReference>
<dbReference type="GO" id="GO:0005524">
    <property type="term" value="F:ATP binding"/>
    <property type="evidence" value="ECO:0007669"/>
    <property type="project" value="UniProtKB-UniRule"/>
</dbReference>
<dbReference type="GO" id="GO:0046872">
    <property type="term" value="F:metal ion binding"/>
    <property type="evidence" value="ECO:0007669"/>
    <property type="project" value="UniProtKB-KW"/>
</dbReference>
<dbReference type="GO" id="GO:0004550">
    <property type="term" value="F:nucleoside diphosphate kinase activity"/>
    <property type="evidence" value="ECO:0007669"/>
    <property type="project" value="UniProtKB-UniRule"/>
</dbReference>
<dbReference type="GO" id="GO:0006241">
    <property type="term" value="P:CTP biosynthetic process"/>
    <property type="evidence" value="ECO:0007669"/>
    <property type="project" value="UniProtKB-UniRule"/>
</dbReference>
<dbReference type="GO" id="GO:0006183">
    <property type="term" value="P:GTP biosynthetic process"/>
    <property type="evidence" value="ECO:0007669"/>
    <property type="project" value="UniProtKB-UniRule"/>
</dbReference>
<dbReference type="GO" id="GO:0006228">
    <property type="term" value="P:UTP biosynthetic process"/>
    <property type="evidence" value="ECO:0007669"/>
    <property type="project" value="UniProtKB-UniRule"/>
</dbReference>
<dbReference type="CDD" id="cd04413">
    <property type="entry name" value="NDPk_I"/>
    <property type="match status" value="1"/>
</dbReference>
<dbReference type="FunFam" id="3.30.70.141:FF:000001">
    <property type="entry name" value="Nucleoside diphosphate kinase"/>
    <property type="match status" value="1"/>
</dbReference>
<dbReference type="Gene3D" id="3.30.70.141">
    <property type="entry name" value="Nucleoside diphosphate kinase-like domain"/>
    <property type="match status" value="1"/>
</dbReference>
<dbReference type="HAMAP" id="MF_00451">
    <property type="entry name" value="NDP_kinase"/>
    <property type="match status" value="1"/>
</dbReference>
<dbReference type="InterPro" id="IPR034907">
    <property type="entry name" value="NDK-like_dom"/>
</dbReference>
<dbReference type="InterPro" id="IPR036850">
    <property type="entry name" value="NDK-like_dom_sf"/>
</dbReference>
<dbReference type="InterPro" id="IPR001564">
    <property type="entry name" value="Nucleoside_diP_kinase"/>
</dbReference>
<dbReference type="InterPro" id="IPR023005">
    <property type="entry name" value="Nucleoside_diP_kinase_AS"/>
</dbReference>
<dbReference type="NCBIfam" id="NF001908">
    <property type="entry name" value="PRK00668.1"/>
    <property type="match status" value="1"/>
</dbReference>
<dbReference type="PANTHER" id="PTHR46161">
    <property type="entry name" value="NUCLEOSIDE DIPHOSPHATE KINASE"/>
    <property type="match status" value="1"/>
</dbReference>
<dbReference type="PANTHER" id="PTHR46161:SF3">
    <property type="entry name" value="NUCLEOSIDE DIPHOSPHATE KINASE DDB_G0292928-RELATED"/>
    <property type="match status" value="1"/>
</dbReference>
<dbReference type="Pfam" id="PF00334">
    <property type="entry name" value="NDK"/>
    <property type="match status" value="1"/>
</dbReference>
<dbReference type="PRINTS" id="PR01243">
    <property type="entry name" value="NUCDPKINASE"/>
</dbReference>
<dbReference type="SMART" id="SM00562">
    <property type="entry name" value="NDK"/>
    <property type="match status" value="1"/>
</dbReference>
<dbReference type="SUPFAM" id="SSF54919">
    <property type="entry name" value="Nucleoside diphosphate kinase, NDK"/>
    <property type="match status" value="1"/>
</dbReference>
<dbReference type="PROSITE" id="PS00469">
    <property type="entry name" value="NDPK"/>
    <property type="match status" value="1"/>
</dbReference>
<dbReference type="PROSITE" id="PS51374">
    <property type="entry name" value="NDPK_LIKE"/>
    <property type="match status" value="1"/>
</dbReference>
<protein>
    <recommendedName>
        <fullName evidence="1">Nucleoside diphosphate kinase</fullName>
        <shortName evidence="1">NDK</shortName>
        <shortName evidence="1">NDP kinase</shortName>
        <ecNumber evidence="1">2.7.4.6</ecNumber>
    </recommendedName>
    <alternativeName>
        <fullName evidence="1">Nucleoside-2-P kinase</fullName>
    </alternativeName>
</protein>